<keyword id="KW-0963">Cytoplasm</keyword>
<keyword id="KW-1185">Reference proteome</keyword>
<comment type="subcellular location">
    <subcellularLocation>
        <location evidence="1">Cytoplasm</location>
    </subcellularLocation>
</comment>
<comment type="miscellaneous">
    <text>May have arisen from retrotransposition of the X-linked UBL4A gene during mammalian evolution.</text>
</comment>
<evidence type="ECO:0000250" key="1"/>
<evidence type="ECO:0000255" key="2">
    <source>
        <dbReference type="PROSITE-ProRule" id="PRU00214"/>
    </source>
</evidence>
<evidence type="ECO:0000256" key="3">
    <source>
        <dbReference type="SAM" id="MobiDB-lite"/>
    </source>
</evidence>
<feature type="chain" id="PRO_0000263703" description="Ubiquitin-like protein 4B">
    <location>
        <begin position="1"/>
        <end position="181"/>
    </location>
</feature>
<feature type="domain" description="Ubiquitin-like" evidence="2">
    <location>
        <begin position="1"/>
        <end position="76"/>
    </location>
</feature>
<feature type="region of interest" description="Disordered" evidence="3">
    <location>
        <begin position="139"/>
        <end position="181"/>
    </location>
</feature>
<feature type="compositionally biased region" description="Basic and acidic residues" evidence="3">
    <location>
        <begin position="151"/>
        <end position="161"/>
    </location>
</feature>
<feature type="compositionally biased region" description="Basic and acidic residues" evidence="3">
    <location>
        <begin position="168"/>
        <end position="181"/>
    </location>
</feature>
<proteinExistence type="evidence at transcript level"/>
<reference key="1">
    <citation type="journal article" date="2007" name="Gene Expr. Patterns">
        <title>Ubl4b, an X-derived retrogene, is specifically expressed in post-meiotic germ cells in mammals.</title>
        <authorList>
            <person name="Yang F."/>
            <person name="Skaletsky H."/>
            <person name="Wang P.J."/>
        </authorList>
    </citation>
    <scope>NUCLEOTIDE SEQUENCE [MRNA]</scope>
</reference>
<gene>
    <name type="primary">UBL4B</name>
</gene>
<name>UBL4B_MONDO</name>
<accession>Q19KS6</accession>
<sequence length="181" mass="20968">MWLTVKLLLGRRCLLQVSENEKVFMLKRLVSKQLHVPEKQQRLLFRGQVLADNKRLSDYCIGPNSTLNVIIRPLEKTSPETPSQPRSQSLWPQLNQILLKHFSPQDAENVLRRLREDHRKSLQRMNLDDLERISKVLVPEGKHSGATGSTRESKGDMEPRRNMKCNLAHKDGFKREKSPGK</sequence>
<protein>
    <recommendedName>
        <fullName>Ubiquitin-like protein 4B</fullName>
    </recommendedName>
</protein>
<organism>
    <name type="scientific">Monodelphis domestica</name>
    <name type="common">Gray short-tailed opossum</name>
    <dbReference type="NCBI Taxonomy" id="13616"/>
    <lineage>
        <taxon>Eukaryota</taxon>
        <taxon>Metazoa</taxon>
        <taxon>Chordata</taxon>
        <taxon>Craniata</taxon>
        <taxon>Vertebrata</taxon>
        <taxon>Euteleostomi</taxon>
        <taxon>Mammalia</taxon>
        <taxon>Metatheria</taxon>
        <taxon>Didelphimorphia</taxon>
        <taxon>Didelphidae</taxon>
        <taxon>Monodelphis</taxon>
    </lineage>
</organism>
<dbReference type="EMBL" id="DQ522241">
    <property type="protein sequence ID" value="ABF70518.1"/>
    <property type="molecule type" value="mRNA"/>
</dbReference>
<dbReference type="RefSeq" id="NP_001037687.1">
    <property type="nucleotide sequence ID" value="NM_001044222.1"/>
</dbReference>
<dbReference type="SMR" id="Q19KS6"/>
<dbReference type="FunCoup" id="Q19KS6">
    <property type="interactions" value="1"/>
</dbReference>
<dbReference type="STRING" id="13616.ENSMODP00000048772"/>
<dbReference type="GeneID" id="724042"/>
<dbReference type="KEGG" id="mdo:724042"/>
<dbReference type="CTD" id="164153"/>
<dbReference type="eggNOG" id="KOG0001">
    <property type="taxonomic scope" value="Eukaryota"/>
</dbReference>
<dbReference type="InParanoid" id="Q19KS6"/>
<dbReference type="OrthoDB" id="417450at2759"/>
<dbReference type="Proteomes" id="UP000002280">
    <property type="component" value="Unplaced"/>
</dbReference>
<dbReference type="GO" id="GO:0005737">
    <property type="term" value="C:cytoplasm"/>
    <property type="evidence" value="ECO:0007669"/>
    <property type="project" value="UniProtKB-SubCell"/>
</dbReference>
<dbReference type="Gene3D" id="3.10.20.90">
    <property type="entry name" value="Phosphatidylinositol 3-kinase Catalytic Subunit, Chain A, domain 1"/>
    <property type="match status" value="1"/>
</dbReference>
<dbReference type="InterPro" id="IPR000626">
    <property type="entry name" value="Ubiquitin-like_dom"/>
</dbReference>
<dbReference type="InterPro" id="IPR029071">
    <property type="entry name" value="Ubiquitin-like_domsf"/>
</dbReference>
<dbReference type="InterPro" id="IPR019954">
    <property type="entry name" value="Ubiquitin_CS"/>
</dbReference>
<dbReference type="InterPro" id="IPR019956">
    <property type="entry name" value="Ubiquitin_dom"/>
</dbReference>
<dbReference type="InterPro" id="IPR041421">
    <property type="entry name" value="Ubl4_C_TUGS"/>
</dbReference>
<dbReference type="InterPro" id="IPR043317">
    <property type="entry name" value="UBL4B"/>
</dbReference>
<dbReference type="PANTHER" id="PTHR47905">
    <property type="entry name" value="UBIQUITIN-LIKE PROTEIN 4B"/>
    <property type="match status" value="1"/>
</dbReference>
<dbReference type="PANTHER" id="PTHR47905:SF1">
    <property type="entry name" value="UBIQUITIN-LIKE PROTEIN 4B"/>
    <property type="match status" value="1"/>
</dbReference>
<dbReference type="Pfam" id="PF17840">
    <property type="entry name" value="Tugs"/>
    <property type="match status" value="1"/>
</dbReference>
<dbReference type="Pfam" id="PF00240">
    <property type="entry name" value="ubiquitin"/>
    <property type="match status" value="1"/>
</dbReference>
<dbReference type="PRINTS" id="PR00348">
    <property type="entry name" value="UBIQUITIN"/>
</dbReference>
<dbReference type="SMART" id="SM00213">
    <property type="entry name" value="UBQ"/>
    <property type="match status" value="1"/>
</dbReference>
<dbReference type="SUPFAM" id="SSF54236">
    <property type="entry name" value="Ubiquitin-like"/>
    <property type="match status" value="1"/>
</dbReference>
<dbReference type="PROSITE" id="PS00299">
    <property type="entry name" value="UBIQUITIN_1"/>
    <property type="match status" value="1"/>
</dbReference>
<dbReference type="PROSITE" id="PS50053">
    <property type="entry name" value="UBIQUITIN_2"/>
    <property type="match status" value="1"/>
</dbReference>